<organism>
    <name type="scientific">Yersinia pseudotuberculosis serotype O:3 (strain YPIII)</name>
    <dbReference type="NCBI Taxonomy" id="502800"/>
    <lineage>
        <taxon>Bacteria</taxon>
        <taxon>Pseudomonadati</taxon>
        <taxon>Pseudomonadota</taxon>
        <taxon>Gammaproteobacteria</taxon>
        <taxon>Enterobacterales</taxon>
        <taxon>Yersiniaceae</taxon>
        <taxon>Yersinia</taxon>
    </lineage>
</organism>
<comment type="function">
    <text evidence="1">One of two assembly initiator proteins, it binds directly to the 5'-end of the 23S rRNA, where it nucleates assembly of the 50S subunit.</text>
</comment>
<comment type="function">
    <text evidence="1">One of the proteins that surrounds the polypeptide exit tunnel on the outside of the subunit.</text>
</comment>
<comment type="subunit">
    <text evidence="1">Part of the 50S ribosomal subunit.</text>
</comment>
<comment type="similarity">
    <text evidence="1">Belongs to the universal ribosomal protein uL24 family.</text>
</comment>
<gene>
    <name evidence="1" type="primary">rplX</name>
    <name type="ordered locus">YPK_0294</name>
</gene>
<feature type="chain" id="PRO_1000142059" description="Large ribosomal subunit protein uL24">
    <location>
        <begin position="1"/>
        <end position="104"/>
    </location>
</feature>
<evidence type="ECO:0000255" key="1">
    <source>
        <dbReference type="HAMAP-Rule" id="MF_01326"/>
    </source>
</evidence>
<evidence type="ECO:0000305" key="2"/>
<sequence length="104" mass="11347">MAAKIRRDDEVIVLTGKDKGKRGKVKNVLSSGKVIVEGINLVKKHQKPVPALNQPGGIVEKEAAIQVSNLALFNATTGKADRVGFRFEDGKKVRFFKSTSETIK</sequence>
<reference key="1">
    <citation type="submission" date="2008-02" db="EMBL/GenBank/DDBJ databases">
        <title>Complete sequence of Yersinia pseudotuberculosis YPIII.</title>
        <authorList>
            <consortium name="US DOE Joint Genome Institute"/>
            <person name="Copeland A."/>
            <person name="Lucas S."/>
            <person name="Lapidus A."/>
            <person name="Glavina del Rio T."/>
            <person name="Dalin E."/>
            <person name="Tice H."/>
            <person name="Bruce D."/>
            <person name="Goodwin L."/>
            <person name="Pitluck S."/>
            <person name="Munk A.C."/>
            <person name="Brettin T."/>
            <person name="Detter J.C."/>
            <person name="Han C."/>
            <person name="Tapia R."/>
            <person name="Schmutz J."/>
            <person name="Larimer F."/>
            <person name="Land M."/>
            <person name="Hauser L."/>
            <person name="Challacombe J.F."/>
            <person name="Green L."/>
            <person name="Lindler L.E."/>
            <person name="Nikolich M.P."/>
            <person name="Richardson P."/>
        </authorList>
    </citation>
    <scope>NUCLEOTIDE SEQUENCE [LARGE SCALE GENOMIC DNA]</scope>
    <source>
        <strain>YPIII</strain>
    </source>
</reference>
<proteinExistence type="inferred from homology"/>
<accession>B1JIX2</accession>
<keyword id="KW-0687">Ribonucleoprotein</keyword>
<keyword id="KW-0689">Ribosomal protein</keyword>
<keyword id="KW-0694">RNA-binding</keyword>
<keyword id="KW-0699">rRNA-binding</keyword>
<protein>
    <recommendedName>
        <fullName evidence="1">Large ribosomal subunit protein uL24</fullName>
    </recommendedName>
    <alternativeName>
        <fullName evidence="2">50S ribosomal protein L24</fullName>
    </alternativeName>
</protein>
<dbReference type="EMBL" id="CP000950">
    <property type="protein sequence ID" value="ACA66607.1"/>
    <property type="molecule type" value="Genomic_DNA"/>
</dbReference>
<dbReference type="RefSeq" id="WP_002213327.1">
    <property type="nucleotide sequence ID" value="NZ_CP009792.1"/>
</dbReference>
<dbReference type="SMR" id="B1JIX2"/>
<dbReference type="GeneID" id="57974384"/>
<dbReference type="KEGG" id="ypy:YPK_0294"/>
<dbReference type="PATRIC" id="fig|502800.11.peg.901"/>
<dbReference type="GO" id="GO:1990904">
    <property type="term" value="C:ribonucleoprotein complex"/>
    <property type="evidence" value="ECO:0007669"/>
    <property type="project" value="UniProtKB-KW"/>
</dbReference>
<dbReference type="GO" id="GO:0005840">
    <property type="term" value="C:ribosome"/>
    <property type="evidence" value="ECO:0007669"/>
    <property type="project" value="UniProtKB-KW"/>
</dbReference>
<dbReference type="GO" id="GO:0019843">
    <property type="term" value="F:rRNA binding"/>
    <property type="evidence" value="ECO:0007669"/>
    <property type="project" value="UniProtKB-UniRule"/>
</dbReference>
<dbReference type="GO" id="GO:0003735">
    <property type="term" value="F:structural constituent of ribosome"/>
    <property type="evidence" value="ECO:0007669"/>
    <property type="project" value="InterPro"/>
</dbReference>
<dbReference type="GO" id="GO:0006412">
    <property type="term" value="P:translation"/>
    <property type="evidence" value="ECO:0007669"/>
    <property type="project" value="UniProtKB-UniRule"/>
</dbReference>
<dbReference type="CDD" id="cd06089">
    <property type="entry name" value="KOW_RPL26"/>
    <property type="match status" value="1"/>
</dbReference>
<dbReference type="FunFam" id="2.30.30.30:FF:000004">
    <property type="entry name" value="50S ribosomal protein L24"/>
    <property type="match status" value="1"/>
</dbReference>
<dbReference type="Gene3D" id="2.30.30.30">
    <property type="match status" value="1"/>
</dbReference>
<dbReference type="HAMAP" id="MF_01326_B">
    <property type="entry name" value="Ribosomal_uL24_B"/>
    <property type="match status" value="1"/>
</dbReference>
<dbReference type="InterPro" id="IPR005824">
    <property type="entry name" value="KOW"/>
</dbReference>
<dbReference type="InterPro" id="IPR014722">
    <property type="entry name" value="Rib_uL2_dom2"/>
</dbReference>
<dbReference type="InterPro" id="IPR003256">
    <property type="entry name" value="Ribosomal_uL24"/>
</dbReference>
<dbReference type="InterPro" id="IPR005825">
    <property type="entry name" value="Ribosomal_uL24_CS"/>
</dbReference>
<dbReference type="InterPro" id="IPR041988">
    <property type="entry name" value="Ribosomal_uL24_KOW"/>
</dbReference>
<dbReference type="InterPro" id="IPR008991">
    <property type="entry name" value="Translation_prot_SH3-like_sf"/>
</dbReference>
<dbReference type="NCBIfam" id="TIGR01079">
    <property type="entry name" value="rplX_bact"/>
    <property type="match status" value="1"/>
</dbReference>
<dbReference type="PANTHER" id="PTHR12903">
    <property type="entry name" value="MITOCHONDRIAL RIBOSOMAL PROTEIN L24"/>
    <property type="match status" value="1"/>
</dbReference>
<dbReference type="Pfam" id="PF00467">
    <property type="entry name" value="KOW"/>
    <property type="match status" value="1"/>
</dbReference>
<dbReference type="Pfam" id="PF17136">
    <property type="entry name" value="ribosomal_L24"/>
    <property type="match status" value="1"/>
</dbReference>
<dbReference type="SMART" id="SM00739">
    <property type="entry name" value="KOW"/>
    <property type="match status" value="1"/>
</dbReference>
<dbReference type="SUPFAM" id="SSF50104">
    <property type="entry name" value="Translation proteins SH3-like domain"/>
    <property type="match status" value="1"/>
</dbReference>
<dbReference type="PROSITE" id="PS01108">
    <property type="entry name" value="RIBOSOMAL_L24"/>
    <property type="match status" value="1"/>
</dbReference>
<name>RL24_YERPY</name>